<protein>
    <recommendedName>
        <fullName evidence="1">Imidazole glycerol phosphate synthase subunit HisF</fullName>
        <ecNumber evidence="1">4.3.2.10</ecNumber>
    </recommendedName>
    <alternativeName>
        <fullName evidence="1">IGP synthase cyclase subunit</fullName>
    </alternativeName>
    <alternativeName>
        <fullName evidence="1">IGP synthase subunit HisF</fullName>
    </alternativeName>
    <alternativeName>
        <fullName evidence="1">ImGP synthase subunit HisF</fullName>
        <shortName evidence="1">IGPS subunit HisF</shortName>
    </alternativeName>
</protein>
<evidence type="ECO:0000255" key="1">
    <source>
        <dbReference type="HAMAP-Rule" id="MF_01013"/>
    </source>
</evidence>
<accession>Q81T58</accession>
<accession>Q6I1E1</accession>
<accession>Q6KV87</accession>
<organism>
    <name type="scientific">Bacillus anthracis</name>
    <dbReference type="NCBI Taxonomy" id="1392"/>
    <lineage>
        <taxon>Bacteria</taxon>
        <taxon>Bacillati</taxon>
        <taxon>Bacillota</taxon>
        <taxon>Bacilli</taxon>
        <taxon>Bacillales</taxon>
        <taxon>Bacillaceae</taxon>
        <taxon>Bacillus</taxon>
        <taxon>Bacillus cereus group</taxon>
    </lineage>
</organism>
<feature type="chain" id="PRO_0000142111" description="Imidazole glycerol phosphate synthase subunit HisF">
    <location>
        <begin position="1"/>
        <end position="252"/>
    </location>
</feature>
<feature type="active site" evidence="1">
    <location>
        <position position="11"/>
    </location>
</feature>
<feature type="active site" evidence="1">
    <location>
        <position position="130"/>
    </location>
</feature>
<keyword id="KW-0028">Amino-acid biosynthesis</keyword>
<keyword id="KW-0963">Cytoplasm</keyword>
<keyword id="KW-0368">Histidine biosynthesis</keyword>
<keyword id="KW-0456">Lyase</keyword>
<keyword id="KW-1185">Reference proteome</keyword>
<reference key="1">
    <citation type="journal article" date="2003" name="Nature">
        <title>The genome sequence of Bacillus anthracis Ames and comparison to closely related bacteria.</title>
        <authorList>
            <person name="Read T.D."/>
            <person name="Peterson S.N."/>
            <person name="Tourasse N.J."/>
            <person name="Baillie L.W."/>
            <person name="Paulsen I.T."/>
            <person name="Nelson K.E."/>
            <person name="Tettelin H."/>
            <person name="Fouts D.E."/>
            <person name="Eisen J.A."/>
            <person name="Gill S.R."/>
            <person name="Holtzapple E.K."/>
            <person name="Okstad O.A."/>
            <person name="Helgason E."/>
            <person name="Rilstone J."/>
            <person name="Wu M."/>
            <person name="Kolonay J.F."/>
            <person name="Beanan M.J."/>
            <person name="Dodson R.J."/>
            <person name="Brinkac L.M."/>
            <person name="Gwinn M.L."/>
            <person name="DeBoy R.T."/>
            <person name="Madpu R."/>
            <person name="Daugherty S.C."/>
            <person name="Durkin A.S."/>
            <person name="Haft D.H."/>
            <person name="Nelson W.C."/>
            <person name="Peterson J.D."/>
            <person name="Pop M."/>
            <person name="Khouri H.M."/>
            <person name="Radune D."/>
            <person name="Benton J.L."/>
            <person name="Mahamoud Y."/>
            <person name="Jiang L."/>
            <person name="Hance I.R."/>
            <person name="Weidman J.F."/>
            <person name="Berry K.J."/>
            <person name="Plaut R.D."/>
            <person name="Wolf A.M."/>
            <person name="Watkins K.L."/>
            <person name="Nierman W.C."/>
            <person name="Hazen A."/>
            <person name="Cline R.T."/>
            <person name="Redmond C."/>
            <person name="Thwaite J.E."/>
            <person name="White O."/>
            <person name="Salzberg S.L."/>
            <person name="Thomason B."/>
            <person name="Friedlander A.M."/>
            <person name="Koehler T.M."/>
            <person name="Hanna P.C."/>
            <person name="Kolstoe A.-B."/>
            <person name="Fraser C.M."/>
        </authorList>
    </citation>
    <scope>NUCLEOTIDE SEQUENCE [LARGE SCALE GENOMIC DNA]</scope>
    <source>
        <strain>Ames / isolate Porton</strain>
    </source>
</reference>
<reference key="2">
    <citation type="journal article" date="2009" name="J. Bacteriol.">
        <title>The complete genome sequence of Bacillus anthracis Ames 'Ancestor'.</title>
        <authorList>
            <person name="Ravel J."/>
            <person name="Jiang L."/>
            <person name="Stanley S.T."/>
            <person name="Wilson M.R."/>
            <person name="Decker R.S."/>
            <person name="Read T.D."/>
            <person name="Worsham P."/>
            <person name="Keim P.S."/>
            <person name="Salzberg S.L."/>
            <person name="Fraser-Liggett C.M."/>
            <person name="Rasko D.A."/>
        </authorList>
    </citation>
    <scope>NUCLEOTIDE SEQUENCE [LARGE SCALE GENOMIC DNA]</scope>
    <source>
        <strain>Ames ancestor</strain>
    </source>
</reference>
<reference key="3">
    <citation type="submission" date="2004-01" db="EMBL/GenBank/DDBJ databases">
        <title>Complete genome sequence of Bacillus anthracis Sterne.</title>
        <authorList>
            <person name="Brettin T.S."/>
            <person name="Bruce D."/>
            <person name="Challacombe J.F."/>
            <person name="Gilna P."/>
            <person name="Han C."/>
            <person name="Hill K."/>
            <person name="Hitchcock P."/>
            <person name="Jackson P."/>
            <person name="Keim P."/>
            <person name="Longmire J."/>
            <person name="Lucas S."/>
            <person name="Okinaka R."/>
            <person name="Richardson P."/>
            <person name="Rubin E."/>
            <person name="Tice H."/>
        </authorList>
    </citation>
    <scope>NUCLEOTIDE SEQUENCE [LARGE SCALE GENOMIC DNA]</scope>
    <source>
        <strain>Sterne</strain>
    </source>
</reference>
<name>HIS6_BACAN</name>
<gene>
    <name evidence="1" type="primary">hisF</name>
    <name type="ordered locus">BA_1430</name>
    <name type="ordered locus">GBAA_1430</name>
    <name type="ordered locus">BAS1321</name>
</gene>
<dbReference type="EC" id="4.3.2.10" evidence="1"/>
<dbReference type="EMBL" id="AE016879">
    <property type="protein sequence ID" value="AAP25373.1"/>
    <property type="molecule type" value="Genomic_DNA"/>
</dbReference>
<dbReference type="EMBL" id="AE017334">
    <property type="protein sequence ID" value="AAT30527.1"/>
    <property type="molecule type" value="Genomic_DNA"/>
</dbReference>
<dbReference type="EMBL" id="AE017225">
    <property type="protein sequence ID" value="AAT53641.1"/>
    <property type="molecule type" value="Genomic_DNA"/>
</dbReference>
<dbReference type="RefSeq" id="NP_843887.1">
    <property type="nucleotide sequence ID" value="NC_003997.3"/>
</dbReference>
<dbReference type="RefSeq" id="WP_000880088.1">
    <property type="nucleotide sequence ID" value="NZ_WXXJ01000017.1"/>
</dbReference>
<dbReference type="RefSeq" id="YP_027590.1">
    <property type="nucleotide sequence ID" value="NC_005945.1"/>
</dbReference>
<dbReference type="SMR" id="Q81T58"/>
<dbReference type="STRING" id="261594.GBAA_1430"/>
<dbReference type="DNASU" id="1085550"/>
<dbReference type="GeneID" id="45021409"/>
<dbReference type="KEGG" id="ban:BA_1430"/>
<dbReference type="KEGG" id="banh:HYU01_07250"/>
<dbReference type="KEGG" id="bar:GBAA_1430"/>
<dbReference type="KEGG" id="bat:BAS1321"/>
<dbReference type="PATRIC" id="fig|198094.11.peg.1403"/>
<dbReference type="eggNOG" id="COG0107">
    <property type="taxonomic scope" value="Bacteria"/>
</dbReference>
<dbReference type="HOGENOM" id="CLU_048577_4_0_9"/>
<dbReference type="OMA" id="WEVYIHG"/>
<dbReference type="OrthoDB" id="9781903at2"/>
<dbReference type="UniPathway" id="UPA00031">
    <property type="reaction ID" value="UER00010"/>
</dbReference>
<dbReference type="Proteomes" id="UP000000427">
    <property type="component" value="Chromosome"/>
</dbReference>
<dbReference type="Proteomes" id="UP000000594">
    <property type="component" value="Chromosome"/>
</dbReference>
<dbReference type="GO" id="GO:0005737">
    <property type="term" value="C:cytoplasm"/>
    <property type="evidence" value="ECO:0007669"/>
    <property type="project" value="UniProtKB-SubCell"/>
</dbReference>
<dbReference type="GO" id="GO:0000107">
    <property type="term" value="F:imidazoleglycerol-phosphate synthase activity"/>
    <property type="evidence" value="ECO:0007669"/>
    <property type="project" value="UniProtKB-UniRule"/>
</dbReference>
<dbReference type="GO" id="GO:0016829">
    <property type="term" value="F:lyase activity"/>
    <property type="evidence" value="ECO:0007669"/>
    <property type="project" value="UniProtKB-KW"/>
</dbReference>
<dbReference type="GO" id="GO:0000105">
    <property type="term" value="P:L-histidine biosynthetic process"/>
    <property type="evidence" value="ECO:0007669"/>
    <property type="project" value="UniProtKB-UniRule"/>
</dbReference>
<dbReference type="CDD" id="cd04731">
    <property type="entry name" value="HisF"/>
    <property type="match status" value="1"/>
</dbReference>
<dbReference type="FunFam" id="3.20.20.70:FF:000006">
    <property type="entry name" value="Imidazole glycerol phosphate synthase subunit HisF"/>
    <property type="match status" value="1"/>
</dbReference>
<dbReference type="Gene3D" id="3.20.20.70">
    <property type="entry name" value="Aldolase class I"/>
    <property type="match status" value="1"/>
</dbReference>
<dbReference type="HAMAP" id="MF_01013">
    <property type="entry name" value="HisF"/>
    <property type="match status" value="1"/>
</dbReference>
<dbReference type="InterPro" id="IPR013785">
    <property type="entry name" value="Aldolase_TIM"/>
</dbReference>
<dbReference type="InterPro" id="IPR006062">
    <property type="entry name" value="His_biosynth"/>
</dbReference>
<dbReference type="InterPro" id="IPR004651">
    <property type="entry name" value="HisF"/>
</dbReference>
<dbReference type="InterPro" id="IPR050064">
    <property type="entry name" value="IGPS_HisA/HisF"/>
</dbReference>
<dbReference type="InterPro" id="IPR011060">
    <property type="entry name" value="RibuloseP-bd_barrel"/>
</dbReference>
<dbReference type="NCBIfam" id="TIGR00735">
    <property type="entry name" value="hisF"/>
    <property type="match status" value="1"/>
</dbReference>
<dbReference type="PANTHER" id="PTHR21235:SF2">
    <property type="entry name" value="IMIDAZOLE GLYCEROL PHOSPHATE SYNTHASE HISHF"/>
    <property type="match status" value="1"/>
</dbReference>
<dbReference type="PANTHER" id="PTHR21235">
    <property type="entry name" value="IMIDAZOLE GLYCEROL PHOSPHATE SYNTHASE SUBUNIT HISF/H IGP SYNTHASE SUBUNIT HISF/H"/>
    <property type="match status" value="1"/>
</dbReference>
<dbReference type="Pfam" id="PF00977">
    <property type="entry name" value="His_biosynth"/>
    <property type="match status" value="1"/>
</dbReference>
<dbReference type="SUPFAM" id="SSF51366">
    <property type="entry name" value="Ribulose-phoshate binding barrel"/>
    <property type="match status" value="1"/>
</dbReference>
<comment type="function">
    <text evidence="1">IGPS catalyzes the conversion of PRFAR and glutamine to IGP, AICAR and glutamate. The HisF subunit catalyzes the cyclization activity that produces IGP and AICAR from PRFAR using the ammonia provided by the HisH subunit.</text>
</comment>
<comment type="catalytic activity">
    <reaction evidence="1">
        <text>5-[(5-phospho-1-deoxy-D-ribulos-1-ylimino)methylamino]-1-(5-phospho-beta-D-ribosyl)imidazole-4-carboxamide + L-glutamine = D-erythro-1-(imidazol-4-yl)glycerol 3-phosphate + 5-amino-1-(5-phospho-beta-D-ribosyl)imidazole-4-carboxamide + L-glutamate + H(+)</text>
        <dbReference type="Rhea" id="RHEA:24793"/>
        <dbReference type="ChEBI" id="CHEBI:15378"/>
        <dbReference type="ChEBI" id="CHEBI:29985"/>
        <dbReference type="ChEBI" id="CHEBI:58278"/>
        <dbReference type="ChEBI" id="CHEBI:58359"/>
        <dbReference type="ChEBI" id="CHEBI:58475"/>
        <dbReference type="ChEBI" id="CHEBI:58525"/>
        <dbReference type="EC" id="4.3.2.10"/>
    </reaction>
</comment>
<comment type="pathway">
    <text evidence="1">Amino-acid biosynthesis; L-histidine biosynthesis; L-histidine from 5-phospho-alpha-D-ribose 1-diphosphate: step 5/9.</text>
</comment>
<comment type="subunit">
    <text evidence="1">Heterodimer of HisH and HisF.</text>
</comment>
<comment type="subcellular location">
    <subcellularLocation>
        <location evidence="1">Cytoplasm</location>
    </subcellularLocation>
</comment>
<comment type="similarity">
    <text evidence="1">Belongs to the HisA/HisF family.</text>
</comment>
<proteinExistence type="inferred from homology"/>
<sequence length="252" mass="26874">MLAKRIIPCLDVKEGRVVKGVNFIGLQDVGDPVEIAALYNDAGADEIVFLDITATHEGRKTIIDVVEKTASKVFIPLTVGGGISSVKDMYNLLRAGADKVSINSAAVRNPKLIEEGAQHFGSQCIVVAIDARKVAEGKWNVYVNGGRVDTGMDAIGWAKRVVMLGAGEILLTSMDADGTKNGYDLRLTEEISKSVSIPVIASGGCGHADHIIEVFQKTTVDAALAASIFHYGEATIGDVKRKLRNANVEVRL</sequence>